<sequence>MRGKFIVLEGLEGAGKTTAHQVILAQLEKAGKNVVQTREPGGTPLAEKLRHLIKHETEEAVSDKAELLMLYAARIQLVENVIKPALAEGKWVLGDRHDMSSQAYQGGGRQIDRHLLETLKETVLGNFEPDLTIYLDIDPAVGLARARGRGELDRIEQQSLDFFYRTRQRYLELTQNNEKAVIINAEQSIEQVAADIQQAVENFLKIAK</sequence>
<feature type="chain" id="PRO_1000097370" description="Thymidylate kinase">
    <location>
        <begin position="1"/>
        <end position="208"/>
    </location>
</feature>
<feature type="binding site" evidence="1">
    <location>
        <begin position="10"/>
        <end position="17"/>
    </location>
    <ligand>
        <name>ATP</name>
        <dbReference type="ChEBI" id="CHEBI:30616"/>
    </ligand>
</feature>
<organism>
    <name type="scientific">Actinobacillus pleuropneumoniae serotype 5b (strain L20)</name>
    <dbReference type="NCBI Taxonomy" id="416269"/>
    <lineage>
        <taxon>Bacteria</taxon>
        <taxon>Pseudomonadati</taxon>
        <taxon>Pseudomonadota</taxon>
        <taxon>Gammaproteobacteria</taxon>
        <taxon>Pasteurellales</taxon>
        <taxon>Pasteurellaceae</taxon>
        <taxon>Actinobacillus</taxon>
    </lineage>
</organism>
<evidence type="ECO:0000255" key="1">
    <source>
        <dbReference type="HAMAP-Rule" id="MF_00165"/>
    </source>
</evidence>
<name>KTHY_ACTP2</name>
<accession>A3N3B3</accession>
<reference key="1">
    <citation type="journal article" date="2008" name="J. Bacteriol.">
        <title>The complete genome sequence of Actinobacillus pleuropneumoniae L20 (serotype 5b).</title>
        <authorList>
            <person name="Foote S.J."/>
            <person name="Bosse J.T."/>
            <person name="Bouevitch A.B."/>
            <person name="Langford P.R."/>
            <person name="Young N.M."/>
            <person name="Nash J.H.E."/>
        </authorList>
    </citation>
    <scope>NUCLEOTIDE SEQUENCE [LARGE SCALE GENOMIC DNA]</scope>
    <source>
        <strain>L20</strain>
    </source>
</reference>
<proteinExistence type="inferred from homology"/>
<comment type="function">
    <text evidence="1">Phosphorylation of dTMP to form dTDP in both de novo and salvage pathways of dTTP synthesis.</text>
</comment>
<comment type="catalytic activity">
    <reaction evidence="1">
        <text>dTMP + ATP = dTDP + ADP</text>
        <dbReference type="Rhea" id="RHEA:13517"/>
        <dbReference type="ChEBI" id="CHEBI:30616"/>
        <dbReference type="ChEBI" id="CHEBI:58369"/>
        <dbReference type="ChEBI" id="CHEBI:63528"/>
        <dbReference type="ChEBI" id="CHEBI:456216"/>
        <dbReference type="EC" id="2.7.4.9"/>
    </reaction>
</comment>
<comment type="similarity">
    <text evidence="1">Belongs to the thymidylate kinase family.</text>
</comment>
<protein>
    <recommendedName>
        <fullName evidence="1">Thymidylate kinase</fullName>
        <ecNumber evidence="1">2.7.4.9</ecNumber>
    </recommendedName>
    <alternativeName>
        <fullName evidence="1">dTMP kinase</fullName>
    </alternativeName>
</protein>
<gene>
    <name evidence="1" type="primary">tmk</name>
    <name type="ordered locus">APL_1817</name>
</gene>
<dbReference type="EC" id="2.7.4.9" evidence="1"/>
<dbReference type="EMBL" id="CP000569">
    <property type="protein sequence ID" value="ABN74899.1"/>
    <property type="molecule type" value="Genomic_DNA"/>
</dbReference>
<dbReference type="RefSeq" id="WP_005599398.1">
    <property type="nucleotide sequence ID" value="NC_009053.1"/>
</dbReference>
<dbReference type="SMR" id="A3N3B3"/>
<dbReference type="STRING" id="416269.APL_1817"/>
<dbReference type="EnsemblBacteria" id="ABN74899">
    <property type="protein sequence ID" value="ABN74899"/>
    <property type="gene ID" value="APL_1817"/>
</dbReference>
<dbReference type="GeneID" id="48600109"/>
<dbReference type="KEGG" id="apl:APL_1817"/>
<dbReference type="eggNOG" id="COG0125">
    <property type="taxonomic scope" value="Bacteria"/>
</dbReference>
<dbReference type="HOGENOM" id="CLU_049131_0_1_6"/>
<dbReference type="Proteomes" id="UP000001432">
    <property type="component" value="Chromosome"/>
</dbReference>
<dbReference type="GO" id="GO:0005829">
    <property type="term" value="C:cytosol"/>
    <property type="evidence" value="ECO:0007669"/>
    <property type="project" value="TreeGrafter"/>
</dbReference>
<dbReference type="GO" id="GO:0005524">
    <property type="term" value="F:ATP binding"/>
    <property type="evidence" value="ECO:0007669"/>
    <property type="project" value="UniProtKB-UniRule"/>
</dbReference>
<dbReference type="GO" id="GO:0004798">
    <property type="term" value="F:dTMP kinase activity"/>
    <property type="evidence" value="ECO:0007669"/>
    <property type="project" value="UniProtKB-UniRule"/>
</dbReference>
<dbReference type="GO" id="GO:0006233">
    <property type="term" value="P:dTDP biosynthetic process"/>
    <property type="evidence" value="ECO:0007669"/>
    <property type="project" value="InterPro"/>
</dbReference>
<dbReference type="GO" id="GO:0006235">
    <property type="term" value="P:dTTP biosynthetic process"/>
    <property type="evidence" value="ECO:0007669"/>
    <property type="project" value="UniProtKB-UniRule"/>
</dbReference>
<dbReference type="GO" id="GO:0006227">
    <property type="term" value="P:dUDP biosynthetic process"/>
    <property type="evidence" value="ECO:0007669"/>
    <property type="project" value="TreeGrafter"/>
</dbReference>
<dbReference type="CDD" id="cd01672">
    <property type="entry name" value="TMPK"/>
    <property type="match status" value="1"/>
</dbReference>
<dbReference type="FunFam" id="3.40.50.300:FF:000321">
    <property type="entry name" value="Thymidylate kinase"/>
    <property type="match status" value="1"/>
</dbReference>
<dbReference type="Gene3D" id="3.40.50.300">
    <property type="entry name" value="P-loop containing nucleotide triphosphate hydrolases"/>
    <property type="match status" value="1"/>
</dbReference>
<dbReference type="HAMAP" id="MF_00165">
    <property type="entry name" value="Thymidylate_kinase"/>
    <property type="match status" value="1"/>
</dbReference>
<dbReference type="InterPro" id="IPR027417">
    <property type="entry name" value="P-loop_NTPase"/>
</dbReference>
<dbReference type="InterPro" id="IPR039430">
    <property type="entry name" value="Thymidylate_kin-like_dom"/>
</dbReference>
<dbReference type="InterPro" id="IPR018095">
    <property type="entry name" value="Thymidylate_kin_CS"/>
</dbReference>
<dbReference type="InterPro" id="IPR018094">
    <property type="entry name" value="Thymidylate_kinase"/>
</dbReference>
<dbReference type="NCBIfam" id="TIGR00041">
    <property type="entry name" value="DTMP_kinase"/>
    <property type="match status" value="1"/>
</dbReference>
<dbReference type="PANTHER" id="PTHR10344">
    <property type="entry name" value="THYMIDYLATE KINASE"/>
    <property type="match status" value="1"/>
</dbReference>
<dbReference type="PANTHER" id="PTHR10344:SF4">
    <property type="entry name" value="UMP-CMP KINASE 2, MITOCHONDRIAL"/>
    <property type="match status" value="1"/>
</dbReference>
<dbReference type="Pfam" id="PF02223">
    <property type="entry name" value="Thymidylate_kin"/>
    <property type="match status" value="1"/>
</dbReference>
<dbReference type="SUPFAM" id="SSF52540">
    <property type="entry name" value="P-loop containing nucleoside triphosphate hydrolases"/>
    <property type="match status" value="1"/>
</dbReference>
<dbReference type="PROSITE" id="PS01331">
    <property type="entry name" value="THYMIDYLATE_KINASE"/>
    <property type="match status" value="1"/>
</dbReference>
<keyword id="KW-0067">ATP-binding</keyword>
<keyword id="KW-0418">Kinase</keyword>
<keyword id="KW-0545">Nucleotide biosynthesis</keyword>
<keyword id="KW-0547">Nucleotide-binding</keyword>
<keyword id="KW-1185">Reference proteome</keyword>
<keyword id="KW-0808">Transferase</keyword>